<comment type="catalytic activity">
    <reaction>
        <text>L-seryl-[protein] + ATP = O-phospho-L-seryl-[protein] + ADP + H(+)</text>
        <dbReference type="Rhea" id="RHEA:17989"/>
        <dbReference type="Rhea" id="RHEA-COMP:9863"/>
        <dbReference type="Rhea" id="RHEA-COMP:11604"/>
        <dbReference type="ChEBI" id="CHEBI:15378"/>
        <dbReference type="ChEBI" id="CHEBI:29999"/>
        <dbReference type="ChEBI" id="CHEBI:30616"/>
        <dbReference type="ChEBI" id="CHEBI:83421"/>
        <dbReference type="ChEBI" id="CHEBI:456216"/>
        <dbReference type="EC" id="2.7.11.1"/>
    </reaction>
</comment>
<comment type="catalytic activity">
    <reaction>
        <text>L-threonyl-[protein] + ATP = O-phospho-L-threonyl-[protein] + ADP + H(+)</text>
        <dbReference type="Rhea" id="RHEA:46608"/>
        <dbReference type="Rhea" id="RHEA-COMP:11060"/>
        <dbReference type="Rhea" id="RHEA-COMP:11605"/>
        <dbReference type="ChEBI" id="CHEBI:15378"/>
        <dbReference type="ChEBI" id="CHEBI:30013"/>
        <dbReference type="ChEBI" id="CHEBI:30616"/>
        <dbReference type="ChEBI" id="CHEBI:61977"/>
        <dbReference type="ChEBI" id="CHEBI:456216"/>
        <dbReference type="EC" id="2.7.11.1"/>
    </reaction>
</comment>
<comment type="similarity">
    <text evidence="1">Belongs to the protein kinase superfamily. Ser/Thr protein kinase family. KIN82 subfamily.</text>
</comment>
<protein>
    <recommendedName>
        <fullName>Serine/threonine-protein kinase ppk14</fullName>
        <ecNumber>2.7.11.1</ecNumber>
    </recommendedName>
</protein>
<keyword id="KW-0067">ATP-binding</keyword>
<keyword id="KW-0418">Kinase</keyword>
<keyword id="KW-0547">Nucleotide-binding</keyword>
<keyword id="KW-0597">Phosphoprotein</keyword>
<keyword id="KW-1185">Reference proteome</keyword>
<keyword id="KW-0723">Serine/threonine-protein kinase</keyword>
<keyword id="KW-0808">Transferase</keyword>
<reference key="1">
    <citation type="journal article" date="2002" name="Nature">
        <title>The genome sequence of Schizosaccharomyces pombe.</title>
        <authorList>
            <person name="Wood V."/>
            <person name="Gwilliam R."/>
            <person name="Rajandream M.A."/>
            <person name="Lyne M.H."/>
            <person name="Lyne R."/>
            <person name="Stewart A."/>
            <person name="Sgouros J.G."/>
            <person name="Peat N."/>
            <person name="Hayles J."/>
            <person name="Baker S.G."/>
            <person name="Basham D."/>
            <person name="Bowman S."/>
            <person name="Brooks K."/>
            <person name="Brown D."/>
            <person name="Brown S."/>
            <person name="Chillingworth T."/>
            <person name="Churcher C.M."/>
            <person name="Collins M."/>
            <person name="Connor R."/>
            <person name="Cronin A."/>
            <person name="Davis P."/>
            <person name="Feltwell T."/>
            <person name="Fraser A."/>
            <person name="Gentles S."/>
            <person name="Goble A."/>
            <person name="Hamlin N."/>
            <person name="Harris D.E."/>
            <person name="Hidalgo J."/>
            <person name="Hodgson G."/>
            <person name="Holroyd S."/>
            <person name="Hornsby T."/>
            <person name="Howarth S."/>
            <person name="Huckle E.J."/>
            <person name="Hunt S."/>
            <person name="Jagels K."/>
            <person name="James K.D."/>
            <person name="Jones L."/>
            <person name="Jones M."/>
            <person name="Leather S."/>
            <person name="McDonald S."/>
            <person name="McLean J."/>
            <person name="Mooney P."/>
            <person name="Moule S."/>
            <person name="Mungall K.L."/>
            <person name="Murphy L.D."/>
            <person name="Niblett D."/>
            <person name="Odell C."/>
            <person name="Oliver K."/>
            <person name="O'Neil S."/>
            <person name="Pearson D."/>
            <person name="Quail M.A."/>
            <person name="Rabbinowitsch E."/>
            <person name="Rutherford K.M."/>
            <person name="Rutter S."/>
            <person name="Saunders D."/>
            <person name="Seeger K."/>
            <person name="Sharp S."/>
            <person name="Skelton J."/>
            <person name="Simmonds M.N."/>
            <person name="Squares R."/>
            <person name="Squares S."/>
            <person name="Stevens K."/>
            <person name="Taylor K."/>
            <person name="Taylor R.G."/>
            <person name="Tivey A."/>
            <person name="Walsh S.V."/>
            <person name="Warren T."/>
            <person name="Whitehead S."/>
            <person name="Woodward J.R."/>
            <person name="Volckaert G."/>
            <person name="Aert R."/>
            <person name="Robben J."/>
            <person name="Grymonprez B."/>
            <person name="Weltjens I."/>
            <person name="Vanstreels E."/>
            <person name="Rieger M."/>
            <person name="Schaefer M."/>
            <person name="Mueller-Auer S."/>
            <person name="Gabel C."/>
            <person name="Fuchs M."/>
            <person name="Duesterhoeft A."/>
            <person name="Fritzc C."/>
            <person name="Holzer E."/>
            <person name="Moestl D."/>
            <person name="Hilbert H."/>
            <person name="Borzym K."/>
            <person name="Langer I."/>
            <person name="Beck A."/>
            <person name="Lehrach H."/>
            <person name="Reinhardt R."/>
            <person name="Pohl T.M."/>
            <person name="Eger P."/>
            <person name="Zimmermann W."/>
            <person name="Wedler H."/>
            <person name="Wambutt R."/>
            <person name="Purnelle B."/>
            <person name="Goffeau A."/>
            <person name="Cadieu E."/>
            <person name="Dreano S."/>
            <person name="Gloux S."/>
            <person name="Lelaure V."/>
            <person name="Mottier S."/>
            <person name="Galibert F."/>
            <person name="Aves S.J."/>
            <person name="Xiang Z."/>
            <person name="Hunt C."/>
            <person name="Moore K."/>
            <person name="Hurst S.M."/>
            <person name="Lucas M."/>
            <person name="Rochet M."/>
            <person name="Gaillardin C."/>
            <person name="Tallada V.A."/>
            <person name="Garzon A."/>
            <person name="Thode G."/>
            <person name="Daga R.R."/>
            <person name="Cruzado L."/>
            <person name="Jimenez J."/>
            <person name="Sanchez M."/>
            <person name="del Rey F."/>
            <person name="Benito J."/>
            <person name="Dominguez A."/>
            <person name="Revuelta J.L."/>
            <person name="Moreno S."/>
            <person name="Armstrong J."/>
            <person name="Forsburg S.L."/>
            <person name="Cerutti L."/>
            <person name="Lowe T."/>
            <person name="McCombie W.R."/>
            <person name="Paulsen I."/>
            <person name="Potashkin J."/>
            <person name="Shpakovski G.V."/>
            <person name="Ussery D."/>
            <person name="Barrell B.G."/>
            <person name="Nurse P."/>
        </authorList>
    </citation>
    <scope>NUCLEOTIDE SEQUENCE [LARGE SCALE GENOMIC DNA]</scope>
    <source>
        <strain>972 / ATCC 24843</strain>
    </source>
</reference>
<reference key="2">
    <citation type="journal article" date="2005" name="Eukaryot. Cell">
        <title>Systematic deletion analysis of fission yeast protein kinases.</title>
        <authorList>
            <person name="Bimbo A."/>
            <person name="Jia Y."/>
            <person name="Poh S.L."/>
            <person name="Karuturi R.K.M."/>
            <person name="den Elzen N."/>
            <person name="Peng X."/>
            <person name="Zheng L."/>
            <person name="O'Connell M."/>
            <person name="Liu E.T."/>
            <person name="Balasubramanian M.K."/>
            <person name="Liu J."/>
        </authorList>
    </citation>
    <scope>IDENTIFICATION</scope>
</reference>
<reference key="3">
    <citation type="journal article" date="2008" name="J. Proteome Res.">
        <title>Phosphoproteome analysis of fission yeast.</title>
        <authorList>
            <person name="Wilson-Grady J.T."/>
            <person name="Villen J."/>
            <person name="Gygi S.P."/>
        </authorList>
    </citation>
    <scope>PHOSPHORYLATION [LARGE SCALE ANALYSIS] AT THR-379; SER-381 AND THR-385</scope>
    <scope>IDENTIFICATION BY MASS SPECTROMETRY</scope>
</reference>
<evidence type="ECO:0000255" key="1">
    <source>
        <dbReference type="PROSITE-ProRule" id="PRU00159"/>
    </source>
</evidence>
<evidence type="ECO:0000255" key="2">
    <source>
        <dbReference type="PROSITE-ProRule" id="PRU10027"/>
    </source>
</evidence>
<evidence type="ECO:0000256" key="3">
    <source>
        <dbReference type="SAM" id="MobiDB-lite"/>
    </source>
</evidence>
<evidence type="ECO:0000269" key="4">
    <source>
    </source>
</evidence>
<name>PPK14_SCHPO</name>
<organism>
    <name type="scientific">Schizosaccharomyces pombe (strain 972 / ATCC 24843)</name>
    <name type="common">Fission yeast</name>
    <dbReference type="NCBI Taxonomy" id="284812"/>
    <lineage>
        <taxon>Eukaryota</taxon>
        <taxon>Fungi</taxon>
        <taxon>Dikarya</taxon>
        <taxon>Ascomycota</taxon>
        <taxon>Taphrinomycotina</taxon>
        <taxon>Schizosaccharomycetes</taxon>
        <taxon>Schizosaccharomycetales</taxon>
        <taxon>Schizosaccharomycetaceae</taxon>
        <taxon>Schizosaccharomyces</taxon>
    </lineage>
</organism>
<proteinExistence type="evidence at protein level"/>
<gene>
    <name type="primary">ppk14</name>
    <name type="ORF">SPAC4G8.05</name>
</gene>
<dbReference type="EC" id="2.7.11.1"/>
<dbReference type="EMBL" id="CU329670">
    <property type="protein sequence ID" value="CAA91206.1"/>
    <property type="molecule type" value="Genomic_DNA"/>
</dbReference>
<dbReference type="PIR" id="S62482">
    <property type="entry name" value="S62482"/>
</dbReference>
<dbReference type="RefSeq" id="NP_593065.1">
    <property type="nucleotide sequence ID" value="NM_001018463.2"/>
</dbReference>
<dbReference type="SMR" id="Q09831"/>
<dbReference type="BioGRID" id="279852">
    <property type="interactions" value="111"/>
</dbReference>
<dbReference type="FunCoup" id="Q09831">
    <property type="interactions" value="215"/>
</dbReference>
<dbReference type="STRING" id="284812.Q09831"/>
<dbReference type="iPTMnet" id="Q09831"/>
<dbReference type="PaxDb" id="4896-SPAC4G8.05.1"/>
<dbReference type="EnsemblFungi" id="SPAC4G8.05.1">
    <property type="protein sequence ID" value="SPAC4G8.05.1:pep"/>
    <property type="gene ID" value="SPAC4G8.05"/>
</dbReference>
<dbReference type="GeneID" id="2543432"/>
<dbReference type="KEGG" id="spo:2543432"/>
<dbReference type="PomBase" id="SPAC4G8.05">
    <property type="gene designation" value="ppk14"/>
</dbReference>
<dbReference type="VEuPathDB" id="FungiDB:SPAC4G8.05"/>
<dbReference type="eggNOG" id="KOG0610">
    <property type="taxonomic scope" value="Eukaryota"/>
</dbReference>
<dbReference type="HOGENOM" id="CLU_000288_84_4_1"/>
<dbReference type="InParanoid" id="Q09831"/>
<dbReference type="OMA" id="HTEPPII"/>
<dbReference type="PhylomeDB" id="Q09831"/>
<dbReference type="PRO" id="PR:Q09831"/>
<dbReference type="Proteomes" id="UP000002485">
    <property type="component" value="Chromosome I"/>
</dbReference>
<dbReference type="GO" id="GO:0005737">
    <property type="term" value="C:cytoplasm"/>
    <property type="evidence" value="ECO:0000318"/>
    <property type="project" value="GO_Central"/>
</dbReference>
<dbReference type="GO" id="GO:0005634">
    <property type="term" value="C:nucleus"/>
    <property type="evidence" value="ECO:0000318"/>
    <property type="project" value="GO_Central"/>
</dbReference>
<dbReference type="GO" id="GO:0005886">
    <property type="term" value="C:plasma membrane"/>
    <property type="evidence" value="ECO:0000269"/>
    <property type="project" value="PomBase"/>
</dbReference>
<dbReference type="GO" id="GO:0005524">
    <property type="term" value="F:ATP binding"/>
    <property type="evidence" value="ECO:0000255"/>
    <property type="project" value="PomBase"/>
</dbReference>
<dbReference type="GO" id="GO:0106310">
    <property type="term" value="F:protein serine kinase activity"/>
    <property type="evidence" value="ECO:0007669"/>
    <property type="project" value="RHEA"/>
</dbReference>
<dbReference type="GO" id="GO:0004674">
    <property type="term" value="F:protein serine/threonine kinase activity"/>
    <property type="evidence" value="ECO:0000318"/>
    <property type="project" value="GO_Central"/>
</dbReference>
<dbReference type="GO" id="GO:0045332">
    <property type="term" value="P:phospholipid translocation"/>
    <property type="evidence" value="ECO:0000318"/>
    <property type="project" value="GO_Central"/>
</dbReference>
<dbReference type="GO" id="GO:0023052">
    <property type="term" value="P:signaling"/>
    <property type="evidence" value="ECO:0000303"/>
    <property type="project" value="PomBase"/>
</dbReference>
<dbReference type="CDD" id="cd05574">
    <property type="entry name" value="STKc_phototropin_like"/>
    <property type="match status" value="1"/>
</dbReference>
<dbReference type="FunFam" id="3.30.200.20:FF:000524">
    <property type="entry name" value="Non-specific serine/threonine protein kinase"/>
    <property type="match status" value="1"/>
</dbReference>
<dbReference type="FunFam" id="1.10.510.10:FF:000121">
    <property type="entry name" value="Serine/threonine-protein kinase nrc-2"/>
    <property type="match status" value="1"/>
</dbReference>
<dbReference type="Gene3D" id="3.30.200.20">
    <property type="entry name" value="Phosphorylase Kinase, domain 1"/>
    <property type="match status" value="1"/>
</dbReference>
<dbReference type="Gene3D" id="1.10.510.10">
    <property type="entry name" value="Transferase(Phosphotransferase) domain 1"/>
    <property type="match status" value="1"/>
</dbReference>
<dbReference type="InterPro" id="IPR011009">
    <property type="entry name" value="Kinase-like_dom_sf"/>
</dbReference>
<dbReference type="InterPro" id="IPR000719">
    <property type="entry name" value="Prot_kinase_dom"/>
</dbReference>
<dbReference type="InterPro" id="IPR008271">
    <property type="entry name" value="Ser/Thr_kinase_AS"/>
</dbReference>
<dbReference type="PANTHER" id="PTHR45637">
    <property type="entry name" value="FLIPPASE KINASE 1-RELATED"/>
    <property type="match status" value="1"/>
</dbReference>
<dbReference type="Pfam" id="PF00069">
    <property type="entry name" value="Pkinase"/>
    <property type="match status" value="1"/>
</dbReference>
<dbReference type="SMART" id="SM00220">
    <property type="entry name" value="S_TKc"/>
    <property type="match status" value="1"/>
</dbReference>
<dbReference type="SUPFAM" id="SSF56112">
    <property type="entry name" value="Protein kinase-like (PK-like)"/>
    <property type="match status" value="1"/>
</dbReference>
<dbReference type="PROSITE" id="PS50011">
    <property type="entry name" value="PROTEIN_KINASE_DOM"/>
    <property type="match status" value="1"/>
</dbReference>
<dbReference type="PROSITE" id="PS00108">
    <property type="entry name" value="PROTEIN_KINASE_ST"/>
    <property type="match status" value="1"/>
</dbReference>
<sequence length="566" mass="63482">MNELHDGESSEEGRINVEDHLEEAKKDDTGHWKHSGTAKPSKFRAFIRLHFKDSRKFAFSRKKEKELTSEDSDAANQSPSGAPESQTEEESDRKIDGTGSSAEGGDGSGTDSISVIKKSFFKSGRKKKDVPKSRNVSRSNGADTSVQREKLKDIFSPHGKEKELAHIKKTVATRARTYSSNSIKICDVEVGPSSFEKVFLLGKGDVGRVYLVREKKSGKFYAMKVLSKQEMIKRNKSKRAFAEQHILATSNHPFIVTLYHSFQSDEYLYLCMEYCMGGEFFRALQRRPGRCLSENEAKFYIAEVTAALEYLHLMGFIYRDLKPENILLHESGHIMLSDFDLSKQSNSAGAPTVIQARNAPSAQNAYALDTKSCIADFRTNSFVGTEEYIAPEVIKGCGHTSAVDWWTLGILFYEMLYATTPFKGKNRNMTFSNILHKDVIFPEYADAPSISSLCKNLIRKLLVKDENDRLGSQAGAADVKLHPFFKNVQWALLRHTEPPIIPKLAPIDEKGNPNISHLKESKSLDITHSPQNTQTVEVPLSNLSGADHGDDPFESFNSVTVHHEWD</sequence>
<accession>Q09831</accession>
<feature type="chain" id="PRO_0000086043" description="Serine/threonine-protein kinase ppk14">
    <location>
        <begin position="1"/>
        <end position="566"/>
    </location>
</feature>
<feature type="domain" description="Protein kinase" evidence="1">
    <location>
        <begin position="195"/>
        <end position="485"/>
    </location>
</feature>
<feature type="region of interest" description="Disordered" evidence="3">
    <location>
        <begin position="1"/>
        <end position="39"/>
    </location>
</feature>
<feature type="region of interest" description="Disordered" evidence="3">
    <location>
        <begin position="60"/>
        <end position="152"/>
    </location>
</feature>
<feature type="compositionally biased region" description="Basic and acidic residues" evidence="3">
    <location>
        <begin position="1"/>
        <end position="31"/>
    </location>
</feature>
<feature type="compositionally biased region" description="Polar residues" evidence="3">
    <location>
        <begin position="74"/>
        <end position="85"/>
    </location>
</feature>
<feature type="compositionally biased region" description="Basic residues" evidence="3">
    <location>
        <begin position="119"/>
        <end position="129"/>
    </location>
</feature>
<feature type="compositionally biased region" description="Polar residues" evidence="3">
    <location>
        <begin position="134"/>
        <end position="145"/>
    </location>
</feature>
<feature type="active site" description="Proton acceptor" evidence="1 2">
    <location>
        <position position="320"/>
    </location>
</feature>
<feature type="binding site" evidence="1">
    <location>
        <begin position="201"/>
        <end position="209"/>
    </location>
    <ligand>
        <name>ATP</name>
        <dbReference type="ChEBI" id="CHEBI:30616"/>
    </ligand>
</feature>
<feature type="binding site" evidence="1">
    <location>
        <position position="224"/>
    </location>
    <ligand>
        <name>ATP</name>
        <dbReference type="ChEBI" id="CHEBI:30616"/>
    </ligand>
</feature>
<feature type="modified residue" description="Phosphothreonine" evidence="4">
    <location>
        <position position="379"/>
    </location>
</feature>
<feature type="modified residue" description="Phosphoserine" evidence="4">
    <location>
        <position position="381"/>
    </location>
</feature>
<feature type="modified residue" description="Phosphothreonine" evidence="4">
    <location>
        <position position="385"/>
    </location>
</feature>